<name>CTCP_KITAU</name>
<proteinExistence type="evidence at protein level"/>
<reference key="1">
    <citation type="journal article" date="2013" name="Metab. Eng.">
        <title>Deciphering and engineering of the final step halogenase for improved chlortetracycline biosynthesis in industrial Streptomyces aureofaciens.</title>
        <authorList>
            <person name="Zhu T."/>
            <person name="Cheng X."/>
            <person name="Liu Y."/>
            <person name="Deng Z."/>
            <person name="You D."/>
        </authorList>
    </citation>
    <scope>NUCLEOTIDE SEQUENCE [GENOMIC DNA]</scope>
    <scope>FUNCTION</scope>
    <scope>CATALYTIC ACTIVITY</scope>
    <scope>BIOPHYSICOCHEMICAL PROPERTIES</scope>
    <scope>DISRUPTION PHENOTYPE</scope>
    <scope>SUBUNIT</scope>
    <scope>SUBSTRATE SPECIFICITY</scope>
    <scope>REACTION MECHANISM</scope>
    <source>
        <strain evidence="7">F3</strain>
    </source>
</reference>
<reference key="2">
    <citation type="submission" date="2016-08" db="EMBL/GenBank/DDBJ databases">
        <title>Sequencing, assembly and comparative genomics of S. aureofaciens ATCC 10762.</title>
        <authorList>
            <person name="Gradnigo J.S."/>
            <person name="Johnson N."/>
            <person name="Somerville G.A."/>
        </authorList>
    </citation>
    <scope>NUCLEOTIDE SEQUENCE [LARGE SCALE GENOMIC DNA]</scope>
    <source>
        <strain evidence="9 10">ATCC 10762 / DSM 40127 / CCM 3239 / JCM 4008 / LMG 5968 / NBRC 12843 / NCIMB 8234 / A-377</strain>
    </source>
</reference>
<reference key="3">
    <citation type="submission" date="2017-04" db="EMBL/GenBank/DDBJ databases">
        <title>TAR cloning and integrated overexpression of 6-demethylchlortetracycline biosynthetic gene cluster in Streptomyces aureofaciens.</title>
        <authorList>
            <person name="Hu H."/>
            <person name="Huang H."/>
            <person name="Min T."/>
        </authorList>
    </citation>
    <scope>NUCLEOTIDE SEQUENCE [LARGE SCALE GENOMIC DNA]</scope>
    <source>
        <strain evidence="8">DM-1</strain>
    </source>
</reference>
<reference key="4">
    <citation type="journal article" date="1995" name="Biosci. Biotechnol. Biochem.">
        <title>Cloning and nucleotide sequence of the gene responsible for chlorination of tetracycline.</title>
        <authorList>
            <person name="Dairi T."/>
            <person name="Nakano T."/>
            <person name="Aisaka K."/>
            <person name="Katsumata R."/>
            <person name="Hasegawa M."/>
        </authorList>
    </citation>
    <scope>PATHWAY</scope>
    <source>
        <strain>NRRL 3203</strain>
    </source>
</reference>
<sequence length="555" mass="62704">MTDTTADQTRHGDRPYDVVIIGSGLSGTMLGSILAKHGFRIMLLDGAHHPRFAVGESTIGQTLVVLRLISDRYGVPEIANLASFQDVLANVSSSHGQKSNFGFMFHRDGEEPDPNETSQFRIPSIVGNAAHFFRQDTDSYMFHAAVRYGCDARQYYRVENIEFDDGGVTVSGADGSTVRARYLVDASGFRSPLARQLGLREEPSRLKHHARSIFTHMVGVDAIDDHVDTPAELRPPVPWNDGTMHHIFERGWMWIIPFNNHPGATNPLCSVGIQLDERRYPARPDLTPEEEFWSHVDRFPAVQRQLKGARSVREWVRTDRMQYSSSRTVGERWCLMSHAAGFIDPLFSRGLSNTCEIINALSWRLMAALREDDFAVERFAYVEELEQGLLDWNDKLVNNSFISFSHYPLWNSVFRIWASASVIGGKRILNALTRTKETGDDSHCQALDDNPYPGLWCPLDFYKEAFDELTELCEAVDAGHTTAEEAARVLEQRVRESDWMLPALGFNDPDTHHINPTADKMIRIAEWATGHHRPEIRELLAASAEEVRAAMRVKP</sequence>
<evidence type="ECO:0000269" key="1">
    <source>
    </source>
</evidence>
<evidence type="ECO:0000303" key="2">
    <source>
    </source>
</evidence>
<evidence type="ECO:0000303" key="3">
    <source>
    </source>
</evidence>
<evidence type="ECO:0000305" key="4"/>
<evidence type="ECO:0000305" key="5">
    <source>
    </source>
</evidence>
<evidence type="ECO:0000305" key="6">
    <source>
    </source>
</evidence>
<evidence type="ECO:0000312" key="7">
    <source>
        <dbReference type="EMBL" id="AEI98659.1"/>
    </source>
</evidence>
<evidence type="ECO:0000312" key="8">
    <source>
        <dbReference type="EMBL" id="ARF80633.1"/>
    </source>
</evidence>
<evidence type="ECO:0000312" key="9">
    <source>
        <dbReference type="EMBL" id="OEV33529.1"/>
    </source>
</evidence>
<evidence type="ECO:0000312" key="10">
    <source>
        <dbReference type="Proteomes" id="UP000037395"/>
    </source>
</evidence>
<evidence type="ECO:0007829" key="11">
    <source>
        <dbReference type="PDB" id="7V0B"/>
    </source>
</evidence>
<evidence type="ECO:0007829" key="12">
    <source>
        <dbReference type="PDB" id="7XGB"/>
    </source>
</evidence>
<feature type="chain" id="PRO_0000443994" description="Tetracycline 7-halogenase">
    <location>
        <begin position="1"/>
        <end position="555"/>
    </location>
</feature>
<feature type="binding site" evidence="5">
    <location>
        <begin position="22"/>
        <end position="27"/>
    </location>
    <ligand>
        <name>FAD</name>
        <dbReference type="ChEBI" id="CHEBI:57692"/>
    </ligand>
</feature>
<feature type="sequence conflict" description="In Ref. 1; AEI98659." evidence="4" ref="1">
    <original>H</original>
    <variation>R</variation>
    <location>
        <position position="480"/>
    </location>
</feature>
<feature type="helix" evidence="12">
    <location>
        <begin position="9"/>
        <end position="12"/>
    </location>
</feature>
<feature type="strand" evidence="11">
    <location>
        <begin position="16"/>
        <end position="21"/>
    </location>
</feature>
<feature type="helix" evidence="11">
    <location>
        <begin position="25"/>
        <end position="36"/>
    </location>
</feature>
<feature type="strand" evidence="11">
    <location>
        <begin position="41"/>
        <end position="44"/>
    </location>
</feature>
<feature type="helix" evidence="11">
    <location>
        <begin position="60"/>
        <end position="73"/>
    </location>
</feature>
<feature type="helix" evidence="11">
    <location>
        <begin position="76"/>
        <end position="79"/>
    </location>
</feature>
<feature type="helix" evidence="11">
    <location>
        <begin position="84"/>
        <end position="90"/>
    </location>
</feature>
<feature type="strand" evidence="11">
    <location>
        <begin position="96"/>
        <end position="105"/>
    </location>
</feature>
<feature type="strand" evidence="11">
    <location>
        <begin position="116"/>
        <end position="121"/>
    </location>
</feature>
<feature type="helix" evidence="11">
    <location>
        <begin position="124"/>
        <end position="126"/>
    </location>
</feature>
<feature type="strand" evidence="11">
    <location>
        <begin position="129"/>
        <end position="131"/>
    </location>
</feature>
<feature type="helix" evidence="11">
    <location>
        <begin position="134"/>
        <end position="147"/>
    </location>
</feature>
<feature type="strand" evidence="11">
    <location>
        <begin position="151"/>
        <end position="155"/>
    </location>
</feature>
<feature type="strand" evidence="11">
    <location>
        <begin position="158"/>
        <end position="164"/>
    </location>
</feature>
<feature type="strand" evidence="11">
    <location>
        <begin position="167"/>
        <end position="172"/>
    </location>
</feature>
<feature type="strand" evidence="11">
    <location>
        <begin position="177"/>
        <end position="185"/>
    </location>
</feature>
<feature type="helix" evidence="11">
    <location>
        <begin position="192"/>
        <end position="196"/>
    </location>
</feature>
<feature type="strand" evidence="11">
    <location>
        <begin position="211"/>
        <end position="219"/>
    </location>
</feature>
<feature type="helix" evidence="11">
    <location>
        <begin position="223"/>
        <end position="225"/>
    </location>
</feature>
<feature type="helix" evidence="11">
    <location>
        <begin position="231"/>
        <end position="233"/>
    </location>
</feature>
<feature type="helix" evidence="11">
    <location>
        <begin position="239"/>
        <end position="241"/>
    </location>
</feature>
<feature type="strand" evidence="11">
    <location>
        <begin position="242"/>
        <end position="248"/>
    </location>
</feature>
<feature type="strand" evidence="11">
    <location>
        <begin position="251"/>
        <end position="258"/>
    </location>
</feature>
<feature type="strand" evidence="11">
    <location>
        <begin position="268"/>
        <end position="275"/>
    </location>
</feature>
<feature type="turn" evidence="11">
    <location>
        <begin position="277"/>
        <end position="279"/>
    </location>
</feature>
<feature type="helix" evidence="11">
    <location>
        <begin position="288"/>
        <end position="296"/>
    </location>
</feature>
<feature type="helix" evidence="11">
    <location>
        <begin position="300"/>
        <end position="305"/>
    </location>
</feature>
<feature type="turn" evidence="11">
    <location>
        <begin position="306"/>
        <end position="308"/>
    </location>
</feature>
<feature type="strand" evidence="11">
    <location>
        <begin position="328"/>
        <end position="330"/>
    </location>
</feature>
<feature type="strand" evidence="11">
    <location>
        <begin position="333"/>
        <end position="335"/>
    </location>
</feature>
<feature type="helix" evidence="11">
    <location>
        <begin position="337"/>
        <end position="340"/>
    </location>
</feature>
<feature type="helix" evidence="11">
    <location>
        <begin position="346"/>
        <end position="348"/>
    </location>
</feature>
<feature type="helix" evidence="11">
    <location>
        <begin position="349"/>
        <end position="371"/>
    </location>
</feature>
<feature type="helix" evidence="11">
    <location>
        <begin position="376"/>
        <end position="379"/>
    </location>
</feature>
<feature type="helix" evidence="11">
    <location>
        <begin position="380"/>
        <end position="403"/>
    </location>
</feature>
<feature type="helix" evidence="11">
    <location>
        <begin position="407"/>
        <end position="438"/>
    </location>
</feature>
<feature type="helix" evidence="11">
    <location>
        <begin position="442"/>
        <end position="445"/>
    </location>
</feature>
<feature type="helix" evidence="11">
    <location>
        <begin position="446"/>
        <end position="448"/>
    </location>
</feature>
<feature type="helix" evidence="11">
    <location>
        <begin position="460"/>
        <end position="477"/>
    </location>
</feature>
<feature type="helix" evidence="11">
    <location>
        <begin position="483"/>
        <end position="496"/>
    </location>
</feature>
<feature type="helix" evidence="11">
    <location>
        <begin position="502"/>
        <end position="504"/>
    </location>
</feature>
<feature type="turn" evidence="11">
    <location>
        <begin position="505"/>
        <end position="507"/>
    </location>
</feature>
<feature type="helix" evidence="11">
    <location>
        <begin position="518"/>
        <end position="529"/>
    </location>
</feature>
<feature type="helix" evidence="11">
    <location>
        <begin position="534"/>
        <end position="540"/>
    </location>
</feature>
<feature type="helix" evidence="11">
    <location>
        <begin position="544"/>
        <end position="551"/>
    </location>
</feature>
<keyword id="KW-0002">3D-structure</keyword>
<keyword id="KW-0045">Antibiotic biosynthesis</keyword>
<keyword id="KW-0274">FAD</keyword>
<keyword id="KW-0285">Flavoprotein</keyword>
<keyword id="KW-0560">Oxidoreductase</keyword>
<keyword id="KW-1185">Reference proteome</keyword>
<organism>
    <name type="scientific">Kitasatospora aureofaciens</name>
    <name type="common">Streptomyces aureofaciens</name>
    <dbReference type="NCBI Taxonomy" id="1894"/>
    <lineage>
        <taxon>Bacteria</taxon>
        <taxon>Bacillati</taxon>
        <taxon>Actinomycetota</taxon>
        <taxon>Actinomycetes</taxon>
        <taxon>Kitasatosporales</taxon>
        <taxon>Streptomycetaceae</taxon>
        <taxon>Kitasatospora</taxon>
    </lineage>
</organism>
<dbReference type="EC" id="1.14.19.49" evidence="1"/>
<dbReference type="EMBL" id="HM627755">
    <property type="protein sequence ID" value="AEI98659.1"/>
    <property type="molecule type" value="Genomic_DNA"/>
</dbReference>
<dbReference type="EMBL" id="JPRF03000065">
    <property type="protein sequence ID" value="OEV33529.1"/>
    <property type="molecule type" value="Genomic_DNA"/>
</dbReference>
<dbReference type="EMBL" id="CP020567">
    <property type="protein sequence ID" value="ARF80633.1"/>
    <property type="molecule type" value="Genomic_DNA"/>
</dbReference>
<dbReference type="RefSeq" id="WP_030282590.1">
    <property type="nucleotide sequence ID" value="NZ_CP020567.1"/>
</dbReference>
<dbReference type="RefSeq" id="WP_033348113.1">
    <property type="nucleotide sequence ID" value="NZ_JNWR01000007.1"/>
</dbReference>
<dbReference type="PDB" id="7V0B">
    <property type="method" value="X-ray"/>
    <property type="resolution" value="2.15 A"/>
    <property type="chains" value="A/B/C/D=1-555"/>
</dbReference>
<dbReference type="PDB" id="7V0D">
    <property type="method" value="X-ray"/>
    <property type="resolution" value="2.60 A"/>
    <property type="chains" value="A/B=1-555"/>
</dbReference>
<dbReference type="PDB" id="7XGB">
    <property type="method" value="X-ray"/>
    <property type="resolution" value="2.70 A"/>
    <property type="chains" value="A/B/C/D=1-555"/>
</dbReference>
<dbReference type="PDBsum" id="7V0B"/>
<dbReference type="PDBsum" id="7V0D"/>
<dbReference type="PDBsum" id="7XGB"/>
<dbReference type="SMR" id="A0A1E7MYN1"/>
<dbReference type="KEGG" id="ag:AEI98659"/>
<dbReference type="KEGG" id="kau:B6264_18525"/>
<dbReference type="OrthoDB" id="103324at2"/>
<dbReference type="BRENDA" id="1.14.19.49">
    <property type="organism ID" value="5978"/>
</dbReference>
<dbReference type="Proteomes" id="UP000037395">
    <property type="component" value="Unassembled WGS sequence"/>
</dbReference>
<dbReference type="GO" id="GO:0071949">
    <property type="term" value="F:FAD binding"/>
    <property type="evidence" value="ECO:0007669"/>
    <property type="project" value="InterPro"/>
</dbReference>
<dbReference type="GO" id="GO:0016491">
    <property type="term" value="F:oxidoreductase activity"/>
    <property type="evidence" value="ECO:0007669"/>
    <property type="project" value="UniProtKB-KW"/>
</dbReference>
<dbReference type="GO" id="GO:0017000">
    <property type="term" value="P:antibiotic biosynthetic process"/>
    <property type="evidence" value="ECO:0007669"/>
    <property type="project" value="UniProtKB-KW"/>
</dbReference>
<dbReference type="Gene3D" id="3.50.50.60">
    <property type="entry name" value="FAD/NAD(P)-binding domain"/>
    <property type="match status" value="1"/>
</dbReference>
<dbReference type="InterPro" id="IPR002938">
    <property type="entry name" value="FAD-bd"/>
</dbReference>
<dbReference type="InterPro" id="IPR036188">
    <property type="entry name" value="FAD/NAD-bd_sf"/>
</dbReference>
<dbReference type="InterPro" id="IPR050816">
    <property type="entry name" value="Flavin-dep_Halogenase_NPB"/>
</dbReference>
<dbReference type="PANTHER" id="PTHR43747:SF5">
    <property type="entry name" value="FAD-BINDING DOMAIN-CONTAINING PROTEIN"/>
    <property type="match status" value="1"/>
</dbReference>
<dbReference type="PANTHER" id="PTHR43747">
    <property type="entry name" value="FAD-BINDING PROTEIN"/>
    <property type="match status" value="1"/>
</dbReference>
<dbReference type="Pfam" id="PF01494">
    <property type="entry name" value="FAD_binding_3"/>
    <property type="match status" value="1"/>
</dbReference>
<dbReference type="PRINTS" id="PR00420">
    <property type="entry name" value="RNGMNOXGNASE"/>
</dbReference>
<dbReference type="SUPFAM" id="SSF51905">
    <property type="entry name" value="FAD/NAD(P)-binding domain"/>
    <property type="match status" value="1"/>
</dbReference>
<comment type="function">
    <text evidence="1">Involved in the biosynthesis of chlorotetracycline (CTC), an important member from antibiotics tetracycline (TC) family, which inhibits protein synthesis in bacteria and is widely involved in clinical therapy, animal feeds and aquaculture. Utilizes FADH(2) supplied by the flavin reductase CtcQ, to catalyze the chlorination of tetracycline (TC) at C7 position, leading to the production of 7-chlorotetracycline. The enzyme forms a lysine chloramine intermediate on an internal lysine residue before transferring the chlorine to the substrate. It is stereo-selective for the 4S (natural) isomer of tetracycline.</text>
</comment>
<comment type="catalytic activity">
    <reaction evidence="1">
        <text>tetracycline + FADH2 + chloride + O2 = 7-chlorotetracycline + FAD + 2 H2O + H(+)</text>
        <dbReference type="Rhea" id="RHEA:50712"/>
        <dbReference type="ChEBI" id="CHEBI:15377"/>
        <dbReference type="ChEBI" id="CHEBI:15378"/>
        <dbReference type="ChEBI" id="CHEBI:15379"/>
        <dbReference type="ChEBI" id="CHEBI:17996"/>
        <dbReference type="ChEBI" id="CHEBI:57692"/>
        <dbReference type="ChEBI" id="CHEBI:58307"/>
        <dbReference type="ChEBI" id="CHEBI:77932"/>
        <dbReference type="ChEBI" id="CHEBI:133598"/>
        <dbReference type="EC" id="1.14.19.49"/>
    </reaction>
</comment>
<comment type="biophysicochemical properties">
    <kinetics>
        <KM evidence="1">56 uM for tetracycline (TC)</KM>
        <text evidence="1">kcat is 0.51 min(-1) for tetracycline (TC) as substrate.</text>
    </kinetics>
</comment>
<comment type="pathway">
    <text evidence="6">Antibiotic biosynthesis.</text>
</comment>
<comment type="subunit">
    <text evidence="1">Homodimer.</text>
</comment>
<comment type="disruption phenotype">
    <text evidence="1">Cells lacking this gene accumulate tetracycline (TC) and abolish the production of chlorotetracycline (CTC).</text>
</comment>
<comment type="similarity">
    <text evidence="4">Belongs to the flavin-dependent halogenase family. Bacterial tryptophan halogenase subfamily.</text>
</comment>
<accession>A0A1E7MYN1</accession>
<accession>S4S3E1</accession>
<protein>
    <recommendedName>
        <fullName evidence="2">Tetracycline 7-halogenase</fullName>
        <ecNumber evidence="1">1.14.19.49</ecNumber>
    </recommendedName>
    <alternativeName>
        <fullName evidence="2">FADH2-dependent halogenase</fullName>
    </alternativeName>
</protein>
<gene>
    <name evidence="2" type="primary">ctcP</name>
    <name evidence="3" type="synonym">cts4</name>
    <name evidence="8" type="ORF">B6264_18525</name>
    <name evidence="9" type="ORF">HS99_0013305</name>
</gene>